<accession>Q8DBI1</accession>
<dbReference type="EMBL" id="AE016795">
    <property type="protein sequence ID" value="AAO10242.1"/>
    <property type="molecule type" value="Genomic_DNA"/>
</dbReference>
<dbReference type="RefSeq" id="WP_011079742.1">
    <property type="nucleotide sequence ID" value="NC_004459.3"/>
</dbReference>
<dbReference type="SMR" id="Q8DBI1"/>
<dbReference type="KEGG" id="vvu:VV1_1836"/>
<dbReference type="HOGENOM" id="CLU_190008_0_0_6"/>
<dbReference type="Proteomes" id="UP000002275">
    <property type="component" value="Chromosome 1"/>
</dbReference>
<dbReference type="HAMAP" id="MF_01064">
    <property type="entry name" value="UPF0253"/>
    <property type="match status" value="1"/>
</dbReference>
<dbReference type="InterPro" id="IPR009624">
    <property type="entry name" value="UPF0253"/>
</dbReference>
<dbReference type="NCBIfam" id="NF003436">
    <property type="entry name" value="PRK04964.1"/>
    <property type="match status" value="1"/>
</dbReference>
<dbReference type="Pfam" id="PF06786">
    <property type="entry name" value="UPF0253"/>
    <property type="match status" value="1"/>
</dbReference>
<organism>
    <name type="scientific">Vibrio vulnificus (strain CMCP6)</name>
    <dbReference type="NCBI Taxonomy" id="216895"/>
    <lineage>
        <taxon>Bacteria</taxon>
        <taxon>Pseudomonadati</taxon>
        <taxon>Pseudomonadota</taxon>
        <taxon>Gammaproteobacteria</taxon>
        <taxon>Vibrionales</taxon>
        <taxon>Vibrionaceae</taxon>
        <taxon>Vibrio</taxon>
    </lineage>
</organism>
<reference key="1">
    <citation type="submission" date="2002-12" db="EMBL/GenBank/DDBJ databases">
        <title>Complete genome sequence of Vibrio vulnificus CMCP6.</title>
        <authorList>
            <person name="Rhee J.H."/>
            <person name="Kim S.Y."/>
            <person name="Chung S.S."/>
            <person name="Kim J.J."/>
            <person name="Moon Y.H."/>
            <person name="Jeong H."/>
            <person name="Choy H.E."/>
        </authorList>
    </citation>
    <scope>NUCLEOTIDE SEQUENCE [LARGE SCALE GENOMIC DNA]</scope>
    <source>
        <strain>CMCP6</strain>
    </source>
</reference>
<evidence type="ECO:0000255" key="1">
    <source>
        <dbReference type="HAMAP-Rule" id="MF_01064"/>
    </source>
</evidence>
<feature type="chain" id="PRO_0000215548" description="UPF0253 protein VV1_1836">
    <location>
        <begin position="1"/>
        <end position="67"/>
    </location>
</feature>
<gene>
    <name type="ordered locus">VV1_1836</name>
</gene>
<comment type="similarity">
    <text evidence="1">Belongs to the UPF0253 family.</text>
</comment>
<proteinExistence type="inferred from homology"/>
<protein>
    <recommendedName>
        <fullName evidence="1">UPF0253 protein VV1_1836</fullName>
    </recommendedName>
</protein>
<name>Y1836_VIBVU</name>
<sequence>MQVYGCCELVRELYAQIGSGDQGYIPQAISCAVKALNDIAADESLPKETREKAAFAAANLLISDFED</sequence>